<keyword id="KW-0150">Chloroplast</keyword>
<keyword id="KW-0934">Plastid</keyword>
<keyword id="KW-0687">Ribonucleoprotein</keyword>
<keyword id="KW-0689">Ribosomal protein</keyword>
<keyword id="KW-0694">RNA-binding</keyword>
<keyword id="KW-0699">rRNA-binding</keyword>
<geneLocation type="chloroplast"/>
<sequence>MPTIKQLIRNTRQPIRNVTKSPALRGCPQRRGTCTRVYTITPKKPNSALRKVARVRLTSGFEITAYIPGIGHNLQEHSVVLVRGGRVKDLPGVRYHIVRGTLDAVGVKDRQQGRSKYGVKKPK</sequence>
<comment type="function">
    <text evidence="1">With S4 and S5 plays an important role in translational accuracy. Located at the interface of the 30S and 50S subunits (By similarity).</text>
</comment>
<comment type="subunit">
    <text evidence="1">Part of the 30S ribosomal subunit.</text>
</comment>
<comment type="subcellular location">
    <subcellularLocation>
        <location>Plastid</location>
        <location>Chloroplast</location>
    </subcellularLocation>
</comment>
<comment type="similarity">
    <text evidence="3">Belongs to the universal ribosomal protein uS12 family.</text>
</comment>
<accession>A4QLD0</accession>
<reference key="1">
    <citation type="submission" date="2007-03" db="EMBL/GenBank/DDBJ databases">
        <title>Sequencing analysis of Lepidium virginicum JO26 chloroplast DNA.</title>
        <authorList>
            <person name="Hosouchi T."/>
            <person name="Tsuruoka H."/>
            <person name="Kotani H."/>
        </authorList>
    </citation>
    <scope>NUCLEOTIDE SEQUENCE [LARGE SCALE GENOMIC DNA]</scope>
</reference>
<proteinExistence type="inferred from homology"/>
<gene>
    <name type="primary">rps12-A</name>
</gene>
<gene>
    <name type="primary">rps12-B</name>
</gene>
<dbReference type="EMBL" id="AP009374">
    <property type="protein sequence ID" value="BAF50485.1"/>
    <property type="molecule type" value="Genomic_DNA"/>
</dbReference>
<dbReference type="EMBL" id="AP009374">
    <property type="protein sequence ID" value="BAF50508.1"/>
    <property type="molecule type" value="Genomic_DNA"/>
</dbReference>
<dbReference type="SMR" id="A4QLD0"/>
<dbReference type="GO" id="GO:0009507">
    <property type="term" value="C:chloroplast"/>
    <property type="evidence" value="ECO:0007669"/>
    <property type="project" value="UniProtKB-SubCell"/>
</dbReference>
<dbReference type="GO" id="GO:0015935">
    <property type="term" value="C:small ribosomal subunit"/>
    <property type="evidence" value="ECO:0007669"/>
    <property type="project" value="InterPro"/>
</dbReference>
<dbReference type="GO" id="GO:0019843">
    <property type="term" value="F:rRNA binding"/>
    <property type="evidence" value="ECO:0007669"/>
    <property type="project" value="UniProtKB-UniRule"/>
</dbReference>
<dbReference type="GO" id="GO:0003735">
    <property type="term" value="F:structural constituent of ribosome"/>
    <property type="evidence" value="ECO:0007669"/>
    <property type="project" value="InterPro"/>
</dbReference>
<dbReference type="GO" id="GO:0006412">
    <property type="term" value="P:translation"/>
    <property type="evidence" value="ECO:0007669"/>
    <property type="project" value="UniProtKB-UniRule"/>
</dbReference>
<dbReference type="CDD" id="cd03368">
    <property type="entry name" value="Ribosomal_S12"/>
    <property type="match status" value="1"/>
</dbReference>
<dbReference type="FunFam" id="2.40.50.140:FF:000008">
    <property type="entry name" value="30S ribosomal protein S12, chloroplastic"/>
    <property type="match status" value="1"/>
</dbReference>
<dbReference type="Gene3D" id="2.40.50.140">
    <property type="entry name" value="Nucleic acid-binding proteins"/>
    <property type="match status" value="1"/>
</dbReference>
<dbReference type="HAMAP" id="MF_00403_B">
    <property type="entry name" value="Ribosomal_uS12_B"/>
    <property type="match status" value="1"/>
</dbReference>
<dbReference type="InterPro" id="IPR012340">
    <property type="entry name" value="NA-bd_OB-fold"/>
</dbReference>
<dbReference type="InterPro" id="IPR006032">
    <property type="entry name" value="Ribosomal_uS12"/>
</dbReference>
<dbReference type="InterPro" id="IPR005679">
    <property type="entry name" value="Ribosomal_uS12_bac"/>
</dbReference>
<dbReference type="NCBIfam" id="TIGR00981">
    <property type="entry name" value="rpsL_bact"/>
    <property type="match status" value="1"/>
</dbReference>
<dbReference type="PANTHER" id="PTHR11652">
    <property type="entry name" value="30S RIBOSOMAL PROTEIN S12 FAMILY MEMBER"/>
    <property type="match status" value="1"/>
</dbReference>
<dbReference type="Pfam" id="PF00164">
    <property type="entry name" value="Ribosom_S12_S23"/>
    <property type="match status" value="1"/>
</dbReference>
<dbReference type="PIRSF" id="PIRSF002133">
    <property type="entry name" value="Ribosomal_S12/S23"/>
    <property type="match status" value="1"/>
</dbReference>
<dbReference type="PRINTS" id="PR01034">
    <property type="entry name" value="RIBOSOMALS12"/>
</dbReference>
<dbReference type="SUPFAM" id="SSF50249">
    <property type="entry name" value="Nucleic acid-binding proteins"/>
    <property type="match status" value="1"/>
</dbReference>
<dbReference type="PROSITE" id="PS00055">
    <property type="entry name" value="RIBOSOMAL_S12"/>
    <property type="match status" value="1"/>
</dbReference>
<protein>
    <recommendedName>
        <fullName evidence="2">Small ribosomal subunit protein uS12cz/uS12cy</fullName>
    </recommendedName>
    <alternativeName>
        <fullName evidence="3">30S ribosomal protein S12, chloroplastic</fullName>
    </alternativeName>
</protein>
<organism>
    <name type="scientific">Lepidium virginicum</name>
    <name type="common">Virginia pepperweed</name>
    <dbReference type="NCBI Taxonomy" id="59292"/>
    <lineage>
        <taxon>Eukaryota</taxon>
        <taxon>Viridiplantae</taxon>
        <taxon>Streptophyta</taxon>
        <taxon>Embryophyta</taxon>
        <taxon>Tracheophyta</taxon>
        <taxon>Spermatophyta</taxon>
        <taxon>Magnoliopsida</taxon>
        <taxon>eudicotyledons</taxon>
        <taxon>Gunneridae</taxon>
        <taxon>Pentapetalae</taxon>
        <taxon>rosids</taxon>
        <taxon>malvids</taxon>
        <taxon>Brassicales</taxon>
        <taxon>Brassicaceae</taxon>
        <taxon>Lepidieae</taxon>
        <taxon>Lepidium</taxon>
    </lineage>
</organism>
<feature type="chain" id="PRO_0000296069" description="Small ribosomal subunit protein uS12cz/uS12cy">
    <location>
        <begin position="1"/>
        <end position="123"/>
    </location>
</feature>
<name>RR12_LEPVR</name>
<evidence type="ECO:0000250" key="1"/>
<evidence type="ECO:0000255" key="2">
    <source>
        <dbReference type="HAMAP-Rule" id="MF_00403"/>
    </source>
</evidence>
<evidence type="ECO:0000305" key="3"/>